<protein>
    <recommendedName>
        <fullName evidence="1">tRNA-specific 2-thiouridylase MnmA</fullName>
        <ecNumber evidence="1">2.8.1.13</ecNumber>
    </recommendedName>
</protein>
<proteinExistence type="inferred from homology"/>
<keyword id="KW-0067">ATP-binding</keyword>
<keyword id="KW-0963">Cytoplasm</keyword>
<keyword id="KW-1015">Disulfide bond</keyword>
<keyword id="KW-0547">Nucleotide-binding</keyword>
<keyword id="KW-1185">Reference proteome</keyword>
<keyword id="KW-0694">RNA-binding</keyword>
<keyword id="KW-0808">Transferase</keyword>
<keyword id="KW-0819">tRNA processing</keyword>
<keyword id="KW-0820">tRNA-binding</keyword>
<dbReference type="EC" id="2.8.1.13" evidence="1"/>
<dbReference type="EMBL" id="CP000264">
    <property type="protein sequence ID" value="ABD55424.1"/>
    <property type="molecule type" value="Genomic_DNA"/>
</dbReference>
<dbReference type="RefSeq" id="WP_011455628.1">
    <property type="nucleotide sequence ID" value="NC_007802.1"/>
</dbReference>
<dbReference type="SMR" id="Q28PD8"/>
<dbReference type="STRING" id="290400.Jann_2507"/>
<dbReference type="KEGG" id="jan:Jann_2507"/>
<dbReference type="eggNOG" id="COG0482">
    <property type="taxonomic scope" value="Bacteria"/>
</dbReference>
<dbReference type="HOGENOM" id="CLU_035188_0_1_5"/>
<dbReference type="OrthoDB" id="9800696at2"/>
<dbReference type="Proteomes" id="UP000008326">
    <property type="component" value="Chromosome"/>
</dbReference>
<dbReference type="GO" id="GO:0005737">
    <property type="term" value="C:cytoplasm"/>
    <property type="evidence" value="ECO:0007669"/>
    <property type="project" value="UniProtKB-SubCell"/>
</dbReference>
<dbReference type="GO" id="GO:0005524">
    <property type="term" value="F:ATP binding"/>
    <property type="evidence" value="ECO:0007669"/>
    <property type="project" value="UniProtKB-KW"/>
</dbReference>
<dbReference type="GO" id="GO:0000049">
    <property type="term" value="F:tRNA binding"/>
    <property type="evidence" value="ECO:0007669"/>
    <property type="project" value="UniProtKB-KW"/>
</dbReference>
<dbReference type="GO" id="GO:0103016">
    <property type="term" value="F:tRNA-uridine 2-sulfurtransferase activity"/>
    <property type="evidence" value="ECO:0007669"/>
    <property type="project" value="UniProtKB-EC"/>
</dbReference>
<dbReference type="GO" id="GO:0002143">
    <property type="term" value="P:tRNA wobble position uridine thiolation"/>
    <property type="evidence" value="ECO:0007669"/>
    <property type="project" value="TreeGrafter"/>
</dbReference>
<dbReference type="CDD" id="cd01998">
    <property type="entry name" value="MnmA_TRMU-like"/>
    <property type="match status" value="1"/>
</dbReference>
<dbReference type="FunFam" id="2.30.30.280:FF:000001">
    <property type="entry name" value="tRNA-specific 2-thiouridylase MnmA"/>
    <property type="match status" value="1"/>
</dbReference>
<dbReference type="FunFam" id="3.40.50.620:FF:000115">
    <property type="entry name" value="tRNA-specific 2-thiouridylase MnmA"/>
    <property type="match status" value="1"/>
</dbReference>
<dbReference type="Gene3D" id="2.30.30.280">
    <property type="entry name" value="Adenine nucleotide alpha hydrolases-like domains"/>
    <property type="match status" value="1"/>
</dbReference>
<dbReference type="Gene3D" id="3.40.50.620">
    <property type="entry name" value="HUPs"/>
    <property type="match status" value="1"/>
</dbReference>
<dbReference type="Gene3D" id="2.40.30.10">
    <property type="entry name" value="Translation factors"/>
    <property type="match status" value="1"/>
</dbReference>
<dbReference type="HAMAP" id="MF_00144">
    <property type="entry name" value="tRNA_thiouridyl_MnmA"/>
    <property type="match status" value="1"/>
</dbReference>
<dbReference type="InterPro" id="IPR004506">
    <property type="entry name" value="MnmA-like"/>
</dbReference>
<dbReference type="InterPro" id="IPR046885">
    <property type="entry name" value="MnmA-like_C"/>
</dbReference>
<dbReference type="InterPro" id="IPR046884">
    <property type="entry name" value="MnmA-like_central"/>
</dbReference>
<dbReference type="InterPro" id="IPR023382">
    <property type="entry name" value="MnmA-like_central_sf"/>
</dbReference>
<dbReference type="InterPro" id="IPR014729">
    <property type="entry name" value="Rossmann-like_a/b/a_fold"/>
</dbReference>
<dbReference type="NCBIfam" id="NF001138">
    <property type="entry name" value="PRK00143.1"/>
    <property type="match status" value="1"/>
</dbReference>
<dbReference type="NCBIfam" id="TIGR00420">
    <property type="entry name" value="trmU"/>
    <property type="match status" value="1"/>
</dbReference>
<dbReference type="PANTHER" id="PTHR11933:SF5">
    <property type="entry name" value="MITOCHONDRIAL TRNA-SPECIFIC 2-THIOURIDYLASE 1"/>
    <property type="match status" value="1"/>
</dbReference>
<dbReference type="PANTHER" id="PTHR11933">
    <property type="entry name" value="TRNA 5-METHYLAMINOMETHYL-2-THIOURIDYLATE -METHYLTRANSFERASE"/>
    <property type="match status" value="1"/>
</dbReference>
<dbReference type="Pfam" id="PF03054">
    <property type="entry name" value="tRNA_Me_trans"/>
    <property type="match status" value="1"/>
</dbReference>
<dbReference type="Pfam" id="PF20258">
    <property type="entry name" value="tRNA_Me_trans_C"/>
    <property type="match status" value="1"/>
</dbReference>
<dbReference type="Pfam" id="PF20259">
    <property type="entry name" value="tRNA_Me_trans_M"/>
    <property type="match status" value="1"/>
</dbReference>
<dbReference type="SUPFAM" id="SSF52402">
    <property type="entry name" value="Adenine nucleotide alpha hydrolases-like"/>
    <property type="match status" value="1"/>
</dbReference>
<gene>
    <name evidence="1" type="primary">mnmA</name>
    <name type="ordered locus">Jann_2507</name>
</gene>
<feature type="chain" id="PRO_0000349665" description="tRNA-specific 2-thiouridylase MnmA">
    <location>
        <begin position="1"/>
        <end position="380"/>
    </location>
</feature>
<feature type="region of interest" description="Interaction with tRNA" evidence="1">
    <location>
        <begin position="166"/>
        <end position="168"/>
    </location>
</feature>
<feature type="active site" description="Nucleophile" evidence="1">
    <location>
        <position position="120"/>
    </location>
</feature>
<feature type="active site" description="Cysteine persulfide intermediate" evidence="1">
    <location>
        <position position="217"/>
    </location>
</feature>
<feature type="binding site" evidence="1">
    <location>
        <begin position="26"/>
        <end position="33"/>
    </location>
    <ligand>
        <name>ATP</name>
        <dbReference type="ChEBI" id="CHEBI:30616"/>
    </ligand>
</feature>
<feature type="binding site" evidence="1">
    <location>
        <position position="52"/>
    </location>
    <ligand>
        <name>ATP</name>
        <dbReference type="ChEBI" id="CHEBI:30616"/>
    </ligand>
</feature>
<feature type="binding site" evidence="1">
    <location>
        <position position="144"/>
    </location>
    <ligand>
        <name>ATP</name>
        <dbReference type="ChEBI" id="CHEBI:30616"/>
    </ligand>
</feature>
<feature type="site" description="Interaction with tRNA" evidence="1">
    <location>
        <position position="145"/>
    </location>
</feature>
<feature type="site" description="Interaction with tRNA" evidence="1">
    <location>
        <position position="359"/>
    </location>
</feature>
<feature type="disulfide bond" description="Alternate" evidence="1">
    <location>
        <begin position="120"/>
        <end position="217"/>
    </location>
</feature>
<organism>
    <name type="scientific">Jannaschia sp. (strain CCS1)</name>
    <dbReference type="NCBI Taxonomy" id="290400"/>
    <lineage>
        <taxon>Bacteria</taxon>
        <taxon>Pseudomonadati</taxon>
        <taxon>Pseudomonadota</taxon>
        <taxon>Alphaproteobacteria</taxon>
        <taxon>Rhodobacterales</taxon>
        <taxon>Roseobacteraceae</taxon>
        <taxon>Jannaschia</taxon>
    </lineage>
</organism>
<evidence type="ECO:0000255" key="1">
    <source>
        <dbReference type="HAMAP-Rule" id="MF_00144"/>
    </source>
</evidence>
<accession>Q28PD8</accession>
<comment type="function">
    <text evidence="1">Catalyzes the 2-thiolation of uridine at the wobble position (U34) of tRNA, leading to the formation of s(2)U34.</text>
</comment>
<comment type="catalytic activity">
    <reaction evidence="1">
        <text>S-sulfanyl-L-cysteinyl-[protein] + uridine(34) in tRNA + AH2 + ATP = 2-thiouridine(34) in tRNA + L-cysteinyl-[protein] + A + AMP + diphosphate + H(+)</text>
        <dbReference type="Rhea" id="RHEA:47032"/>
        <dbReference type="Rhea" id="RHEA-COMP:10131"/>
        <dbReference type="Rhea" id="RHEA-COMP:11726"/>
        <dbReference type="Rhea" id="RHEA-COMP:11727"/>
        <dbReference type="Rhea" id="RHEA-COMP:11728"/>
        <dbReference type="ChEBI" id="CHEBI:13193"/>
        <dbReference type="ChEBI" id="CHEBI:15378"/>
        <dbReference type="ChEBI" id="CHEBI:17499"/>
        <dbReference type="ChEBI" id="CHEBI:29950"/>
        <dbReference type="ChEBI" id="CHEBI:30616"/>
        <dbReference type="ChEBI" id="CHEBI:33019"/>
        <dbReference type="ChEBI" id="CHEBI:61963"/>
        <dbReference type="ChEBI" id="CHEBI:65315"/>
        <dbReference type="ChEBI" id="CHEBI:87170"/>
        <dbReference type="ChEBI" id="CHEBI:456215"/>
        <dbReference type="EC" id="2.8.1.13"/>
    </reaction>
</comment>
<comment type="subcellular location">
    <subcellularLocation>
        <location evidence="1">Cytoplasm</location>
    </subcellularLocation>
</comment>
<comment type="similarity">
    <text evidence="1">Belongs to the MnmA/TRMU family.</text>
</comment>
<reference key="1">
    <citation type="submission" date="2006-02" db="EMBL/GenBank/DDBJ databases">
        <title>Complete sequence of chromosome of Jannaschia sp. CCS1.</title>
        <authorList>
            <consortium name="US DOE Joint Genome Institute"/>
            <person name="Copeland A."/>
            <person name="Lucas S."/>
            <person name="Lapidus A."/>
            <person name="Barry K."/>
            <person name="Detter J.C."/>
            <person name="Glavina del Rio T."/>
            <person name="Hammon N."/>
            <person name="Israni S."/>
            <person name="Pitluck S."/>
            <person name="Brettin T."/>
            <person name="Bruce D."/>
            <person name="Han C."/>
            <person name="Tapia R."/>
            <person name="Gilna P."/>
            <person name="Chertkov O."/>
            <person name="Saunders E."/>
            <person name="Schmutz J."/>
            <person name="Larimer F."/>
            <person name="Land M."/>
            <person name="Kyrpides N."/>
            <person name="Lykidis A."/>
            <person name="Moran M.A."/>
            <person name="Belas R."/>
            <person name="Ye W."/>
            <person name="Buchan A."/>
            <person name="Gonzalez J.M."/>
            <person name="Schell M.A."/>
            <person name="Richardson P."/>
        </authorList>
    </citation>
    <scope>NUCLEOTIDE SEQUENCE [LARGE SCALE GENOMIC DNA]</scope>
    <source>
        <strain>CCS1</strain>
    </source>
</reference>
<name>MNMA_JANSC</name>
<sequence>MALDRSDGLNSLGFAKAPADTRVVVAMSGGVDSSAVAAQLADEGYDVVGVTLQLYDHGAALAKKGACCAGRDIHDAARVAETMGFPHYVLDYENVFKDAVIDEFADSYLAGATPVPCIRCNERVKFKDLLETAKDLDADCMATGHYIQRKMGREKAELHSAADAARDQSYFLFSTKQEQLDFLRFPLGHLESKAETRALAAKYGLSVADKPDSQDICFVPNGNYAAVIEKLRPGAADPGEIVDIDGNVLAMHRGVIHYTIGQRRGLGIGGLDDPLYVVKLDPDTRRVIVGPKEMLSTRTVPVREINWLGDTPFDSQQEWQMDVKIRSTRPPRGAVIRPVSATEAEVELIVAEEGVSPGQACVFYAPEGGRIFGGGWIHKG</sequence>